<evidence type="ECO:0000255" key="1">
    <source>
        <dbReference type="HAMAP-Rule" id="MF_01844"/>
    </source>
</evidence>
<proteinExistence type="inferred from homology"/>
<reference key="1">
    <citation type="journal article" date="2009" name="PLoS Pathog.">
        <title>Molecular evolutionary consequences of niche restriction in Francisella tularensis, a facultative intracellular pathogen.</title>
        <authorList>
            <person name="Larsson P."/>
            <person name="Elfsmark D."/>
            <person name="Svensson K."/>
            <person name="Wikstroem P."/>
            <person name="Forsman M."/>
            <person name="Brettin T."/>
            <person name="Keim P."/>
            <person name="Johansson A."/>
        </authorList>
    </citation>
    <scope>NUCLEOTIDE SEQUENCE [LARGE SCALE GENOMIC DNA]</scope>
    <source>
        <strain>FSC147</strain>
    </source>
</reference>
<organism>
    <name type="scientific">Francisella tularensis subsp. mediasiatica (strain FSC147)</name>
    <dbReference type="NCBI Taxonomy" id="441952"/>
    <lineage>
        <taxon>Bacteria</taxon>
        <taxon>Pseudomonadati</taxon>
        <taxon>Pseudomonadota</taxon>
        <taxon>Gammaproteobacteria</taxon>
        <taxon>Thiotrichales</taxon>
        <taxon>Francisellaceae</taxon>
        <taxon>Francisella</taxon>
    </lineage>
</organism>
<protein>
    <recommendedName>
        <fullName evidence="1">Na(+)/H(+) antiporter NhaA</fullName>
    </recommendedName>
    <alternativeName>
        <fullName evidence="1">Sodium/proton antiporter NhaA</fullName>
    </alternativeName>
</protein>
<keyword id="KW-0050">Antiport</keyword>
<keyword id="KW-0997">Cell inner membrane</keyword>
<keyword id="KW-1003">Cell membrane</keyword>
<keyword id="KW-0406">Ion transport</keyword>
<keyword id="KW-0472">Membrane</keyword>
<keyword id="KW-0915">Sodium</keyword>
<keyword id="KW-0739">Sodium transport</keyword>
<keyword id="KW-0812">Transmembrane</keyword>
<keyword id="KW-1133">Transmembrane helix</keyword>
<keyword id="KW-0813">Transport</keyword>
<accession>B2SEL7</accession>
<name>NHAA_FRATM</name>
<feature type="chain" id="PRO_1000188435" description="Na(+)/H(+) antiporter NhaA">
    <location>
        <begin position="1"/>
        <end position="383"/>
    </location>
</feature>
<feature type="transmembrane region" description="Helical" evidence="1">
    <location>
        <begin position="10"/>
        <end position="30"/>
    </location>
</feature>
<feature type="transmembrane region" description="Helical" evidence="1">
    <location>
        <begin position="56"/>
        <end position="76"/>
    </location>
</feature>
<feature type="transmembrane region" description="Helical" evidence="1">
    <location>
        <begin position="91"/>
        <end position="111"/>
    </location>
</feature>
<feature type="transmembrane region" description="Helical" evidence="1">
    <location>
        <begin position="121"/>
        <end position="141"/>
    </location>
</feature>
<feature type="transmembrane region" description="Helical" evidence="1">
    <location>
        <begin position="150"/>
        <end position="170"/>
    </location>
</feature>
<feature type="transmembrane region" description="Helical" evidence="1">
    <location>
        <begin position="174"/>
        <end position="194"/>
    </location>
</feature>
<feature type="transmembrane region" description="Helical" evidence="1">
    <location>
        <begin position="206"/>
        <end position="226"/>
    </location>
</feature>
<feature type="transmembrane region" description="Helical" evidence="1">
    <location>
        <begin position="254"/>
        <end position="274"/>
    </location>
</feature>
<feature type="transmembrane region" description="Helical" evidence="1">
    <location>
        <begin position="289"/>
        <end position="308"/>
    </location>
</feature>
<feature type="transmembrane region" description="Helical" evidence="1">
    <location>
        <begin position="327"/>
        <end position="347"/>
    </location>
</feature>
<feature type="transmembrane region" description="Helical" evidence="1">
    <location>
        <begin position="355"/>
        <end position="375"/>
    </location>
</feature>
<dbReference type="EMBL" id="CP000915">
    <property type="protein sequence ID" value="ACD30176.1"/>
    <property type="molecule type" value="Genomic_DNA"/>
</dbReference>
<dbReference type="SMR" id="B2SEL7"/>
<dbReference type="KEGG" id="ftm:FTM_0070"/>
<dbReference type="HOGENOM" id="CLU_015803_1_0_6"/>
<dbReference type="GO" id="GO:0005886">
    <property type="term" value="C:plasma membrane"/>
    <property type="evidence" value="ECO:0007669"/>
    <property type="project" value="UniProtKB-SubCell"/>
</dbReference>
<dbReference type="GO" id="GO:0015385">
    <property type="term" value="F:sodium:proton antiporter activity"/>
    <property type="evidence" value="ECO:0007669"/>
    <property type="project" value="TreeGrafter"/>
</dbReference>
<dbReference type="GO" id="GO:0006885">
    <property type="term" value="P:regulation of pH"/>
    <property type="evidence" value="ECO:0007669"/>
    <property type="project" value="InterPro"/>
</dbReference>
<dbReference type="Gene3D" id="1.20.1530.10">
    <property type="entry name" value="Na+/H+ antiporter like domain"/>
    <property type="match status" value="1"/>
</dbReference>
<dbReference type="HAMAP" id="MF_01844">
    <property type="entry name" value="NhaA"/>
    <property type="match status" value="1"/>
</dbReference>
<dbReference type="InterPro" id="IPR023171">
    <property type="entry name" value="Na/H_antiporter_dom_sf"/>
</dbReference>
<dbReference type="InterPro" id="IPR004670">
    <property type="entry name" value="NhaA"/>
</dbReference>
<dbReference type="NCBIfam" id="TIGR00773">
    <property type="entry name" value="NhaA"/>
    <property type="match status" value="1"/>
</dbReference>
<dbReference type="NCBIfam" id="NF007111">
    <property type="entry name" value="PRK09560.1"/>
    <property type="match status" value="1"/>
</dbReference>
<dbReference type="NCBIfam" id="NF007112">
    <property type="entry name" value="PRK09561.1"/>
    <property type="match status" value="1"/>
</dbReference>
<dbReference type="NCBIfam" id="NF011427">
    <property type="entry name" value="PRK14854.1"/>
    <property type="match status" value="1"/>
</dbReference>
<dbReference type="PANTHER" id="PTHR30341:SF0">
    <property type="entry name" value="NA(+)_H(+) ANTIPORTER NHAA"/>
    <property type="match status" value="1"/>
</dbReference>
<dbReference type="PANTHER" id="PTHR30341">
    <property type="entry name" value="SODIUM ION/PROTON ANTIPORTER NHAA-RELATED"/>
    <property type="match status" value="1"/>
</dbReference>
<dbReference type="Pfam" id="PF06965">
    <property type="entry name" value="Na_H_antiport_1"/>
    <property type="match status" value="1"/>
</dbReference>
<sequence>MCASQKNQELIGGLILFSAALLAIVVNNSPLASYYAMLETINVKLGIENLVIDKNLMHWINDGLMAIYFLYIGLEIKREIIVGTLSKPSNIITPAIAAFAGLAMPSLIYLSINHDIKVINGWAIPSATDIAFTLGILALLGTRVPAKLKLLVITIAIFDDIAAIAIIAIFYTKSLSLLSLSLGTLFILAMIICNRIFKINRSSVYVVLGFFAWFCTIKSGVHATLAGFTTALCIPFRENDKDSPANFMEDSLHPWIIYFILPVFAFANAGISFSGISFSILFEPITLGIIWGLFVGKQLGIFSILAVFKKLKWFKLGESFSNLQLYGISLLCGIGFTMSLFIGVLAFNDTHLLNAIKIGVVVGSVLSGFFGYIVLRFIVTNPS</sequence>
<gene>
    <name evidence="1" type="primary">nhaA</name>
    <name type="ordered locus">FTM_0070</name>
</gene>
<comment type="function">
    <text evidence="1">Na(+)/H(+) antiporter that extrudes sodium in exchange for external protons.</text>
</comment>
<comment type="catalytic activity">
    <reaction evidence="1">
        <text>Na(+)(in) + 2 H(+)(out) = Na(+)(out) + 2 H(+)(in)</text>
        <dbReference type="Rhea" id="RHEA:29251"/>
        <dbReference type="ChEBI" id="CHEBI:15378"/>
        <dbReference type="ChEBI" id="CHEBI:29101"/>
    </reaction>
    <physiologicalReaction direction="left-to-right" evidence="1">
        <dbReference type="Rhea" id="RHEA:29252"/>
    </physiologicalReaction>
</comment>
<comment type="subcellular location">
    <subcellularLocation>
        <location evidence="1">Cell inner membrane</location>
        <topology evidence="1">Multi-pass membrane protein</topology>
    </subcellularLocation>
</comment>
<comment type="similarity">
    <text evidence="1">Belongs to the NhaA Na(+)/H(+) (TC 2.A.33) antiporter family.</text>
</comment>